<name>METK_STRPF</name>
<organism>
    <name type="scientific">Streptococcus pyogenes serotype M4 (strain MGAS10750)</name>
    <dbReference type="NCBI Taxonomy" id="370554"/>
    <lineage>
        <taxon>Bacteria</taxon>
        <taxon>Bacillati</taxon>
        <taxon>Bacillota</taxon>
        <taxon>Bacilli</taxon>
        <taxon>Lactobacillales</taxon>
        <taxon>Streptococcaceae</taxon>
        <taxon>Streptococcus</taxon>
    </lineage>
</organism>
<accession>Q1J626</accession>
<proteinExistence type="inferred from homology"/>
<feature type="chain" id="PRO_0000302990" description="S-adenosylmethionine synthase">
    <location>
        <begin position="1"/>
        <end position="398"/>
    </location>
</feature>
<feature type="region of interest" description="Flexible loop" evidence="1">
    <location>
        <begin position="100"/>
        <end position="110"/>
    </location>
</feature>
<feature type="binding site" description="in other chain" evidence="1">
    <location>
        <position position="16"/>
    </location>
    <ligand>
        <name>ATP</name>
        <dbReference type="ChEBI" id="CHEBI:30616"/>
        <note>ligand shared between two neighboring subunits</note>
    </ligand>
</feature>
<feature type="binding site" evidence="1">
    <location>
        <position position="18"/>
    </location>
    <ligand>
        <name>Mg(2+)</name>
        <dbReference type="ChEBI" id="CHEBI:18420"/>
    </ligand>
</feature>
<feature type="binding site" evidence="1">
    <location>
        <position position="44"/>
    </location>
    <ligand>
        <name>K(+)</name>
        <dbReference type="ChEBI" id="CHEBI:29103"/>
    </ligand>
</feature>
<feature type="binding site" description="in other chain" evidence="1">
    <location>
        <position position="57"/>
    </location>
    <ligand>
        <name>L-methionine</name>
        <dbReference type="ChEBI" id="CHEBI:57844"/>
        <note>ligand shared between two neighboring subunits</note>
    </ligand>
</feature>
<feature type="binding site" description="in other chain" evidence="1">
    <location>
        <position position="100"/>
    </location>
    <ligand>
        <name>L-methionine</name>
        <dbReference type="ChEBI" id="CHEBI:57844"/>
        <note>ligand shared between two neighboring subunits</note>
    </ligand>
</feature>
<feature type="binding site" description="in other chain" evidence="1">
    <location>
        <begin position="174"/>
        <end position="176"/>
    </location>
    <ligand>
        <name>ATP</name>
        <dbReference type="ChEBI" id="CHEBI:30616"/>
        <note>ligand shared between two neighboring subunits</note>
    </ligand>
</feature>
<feature type="binding site" description="in other chain" evidence="1">
    <location>
        <begin position="241"/>
        <end position="242"/>
    </location>
    <ligand>
        <name>ATP</name>
        <dbReference type="ChEBI" id="CHEBI:30616"/>
        <note>ligand shared between two neighboring subunits</note>
    </ligand>
</feature>
<feature type="binding site" evidence="1">
    <location>
        <position position="250"/>
    </location>
    <ligand>
        <name>ATP</name>
        <dbReference type="ChEBI" id="CHEBI:30616"/>
        <note>ligand shared between two neighboring subunits</note>
    </ligand>
</feature>
<feature type="binding site" evidence="1">
    <location>
        <position position="250"/>
    </location>
    <ligand>
        <name>L-methionine</name>
        <dbReference type="ChEBI" id="CHEBI:57844"/>
        <note>ligand shared between two neighboring subunits</note>
    </ligand>
</feature>
<feature type="binding site" description="in other chain" evidence="1">
    <location>
        <begin position="256"/>
        <end position="257"/>
    </location>
    <ligand>
        <name>ATP</name>
        <dbReference type="ChEBI" id="CHEBI:30616"/>
        <note>ligand shared between two neighboring subunits</note>
    </ligand>
</feature>
<feature type="binding site" evidence="1">
    <location>
        <position position="273"/>
    </location>
    <ligand>
        <name>ATP</name>
        <dbReference type="ChEBI" id="CHEBI:30616"/>
        <note>ligand shared between two neighboring subunits</note>
    </ligand>
</feature>
<feature type="binding site" evidence="1">
    <location>
        <position position="277"/>
    </location>
    <ligand>
        <name>ATP</name>
        <dbReference type="ChEBI" id="CHEBI:30616"/>
        <note>ligand shared between two neighboring subunits</note>
    </ligand>
</feature>
<feature type="binding site" description="in other chain" evidence="1">
    <location>
        <position position="281"/>
    </location>
    <ligand>
        <name>L-methionine</name>
        <dbReference type="ChEBI" id="CHEBI:57844"/>
        <note>ligand shared between two neighboring subunits</note>
    </ligand>
</feature>
<reference key="1">
    <citation type="journal article" date="2006" name="Proc. Natl. Acad. Sci. U.S.A.">
        <title>Molecular genetic anatomy of inter- and intraserotype variation in the human bacterial pathogen group A Streptococcus.</title>
        <authorList>
            <person name="Beres S.B."/>
            <person name="Richter E.W."/>
            <person name="Nagiec M.J."/>
            <person name="Sumby P."/>
            <person name="Porcella S.F."/>
            <person name="DeLeo F.R."/>
            <person name="Musser J.M."/>
        </authorList>
    </citation>
    <scope>NUCLEOTIDE SEQUENCE [LARGE SCALE GENOMIC DNA]</scope>
    <source>
        <strain>MGAS10750</strain>
    </source>
</reference>
<gene>
    <name evidence="1" type="primary">metK</name>
    <name type="ordered locus">MGAS10750_Spy1207</name>
</gene>
<evidence type="ECO:0000255" key="1">
    <source>
        <dbReference type="HAMAP-Rule" id="MF_00086"/>
    </source>
</evidence>
<sequence>MSERKLFTSESVSEGHPDKIADQISDAILDAILAEDPEAHVAAETCVYTGSVHVFGEISTTAYIDINRVVRDTIAEIGYTEAEYGFSAESVGVHPSLVEQSGDIAQGVNEALESREGDTDDLSHIGAGDQGLMFGFAINETPELMPLPISLSHQLVRRLAELRKSGEISYLRPDAKSQVTVEYDEHDKPVRVDTVVISTQHDPEATNDQIRQDVIEKVIKDVIPADYLDDDTKFFINPTGRFVIGGPQGDSGLTGRKIIVDTYGGYSRHGGGAFSGKDATKVDRSASYAARYIAKNLVAAGLATKAEVQLAYAIGVAQPVSVRVDTFGTSTVPEAVLEAAVRQVFDLRPAGIIQMLDLKRPIYKQTAAYGHMGRTDIDLPWERLNKVDALVEAVKTVL</sequence>
<dbReference type="EC" id="2.5.1.6" evidence="1"/>
<dbReference type="EMBL" id="CP000262">
    <property type="protein sequence ID" value="ABF38157.1"/>
    <property type="molecule type" value="Genomic_DNA"/>
</dbReference>
<dbReference type="SMR" id="Q1J626"/>
<dbReference type="KEGG" id="spi:MGAS10750_Spy1207"/>
<dbReference type="HOGENOM" id="CLU_041802_1_1_9"/>
<dbReference type="UniPathway" id="UPA00315">
    <property type="reaction ID" value="UER00080"/>
</dbReference>
<dbReference type="Proteomes" id="UP000002434">
    <property type="component" value="Chromosome"/>
</dbReference>
<dbReference type="GO" id="GO:0005737">
    <property type="term" value="C:cytoplasm"/>
    <property type="evidence" value="ECO:0007669"/>
    <property type="project" value="UniProtKB-SubCell"/>
</dbReference>
<dbReference type="GO" id="GO:0005524">
    <property type="term" value="F:ATP binding"/>
    <property type="evidence" value="ECO:0007669"/>
    <property type="project" value="UniProtKB-UniRule"/>
</dbReference>
<dbReference type="GO" id="GO:0000287">
    <property type="term" value="F:magnesium ion binding"/>
    <property type="evidence" value="ECO:0007669"/>
    <property type="project" value="UniProtKB-UniRule"/>
</dbReference>
<dbReference type="GO" id="GO:0004478">
    <property type="term" value="F:methionine adenosyltransferase activity"/>
    <property type="evidence" value="ECO:0007669"/>
    <property type="project" value="UniProtKB-UniRule"/>
</dbReference>
<dbReference type="GO" id="GO:0006730">
    <property type="term" value="P:one-carbon metabolic process"/>
    <property type="evidence" value="ECO:0007669"/>
    <property type="project" value="UniProtKB-KW"/>
</dbReference>
<dbReference type="GO" id="GO:0006556">
    <property type="term" value="P:S-adenosylmethionine biosynthetic process"/>
    <property type="evidence" value="ECO:0007669"/>
    <property type="project" value="UniProtKB-UniRule"/>
</dbReference>
<dbReference type="CDD" id="cd18079">
    <property type="entry name" value="S-AdoMet_synt"/>
    <property type="match status" value="1"/>
</dbReference>
<dbReference type="FunFam" id="3.30.300.10:FF:000003">
    <property type="entry name" value="S-adenosylmethionine synthase"/>
    <property type="match status" value="1"/>
</dbReference>
<dbReference type="Gene3D" id="3.30.300.10">
    <property type="match status" value="3"/>
</dbReference>
<dbReference type="HAMAP" id="MF_00086">
    <property type="entry name" value="S_AdoMet_synth1"/>
    <property type="match status" value="1"/>
</dbReference>
<dbReference type="InterPro" id="IPR022631">
    <property type="entry name" value="ADOMET_SYNTHASE_CS"/>
</dbReference>
<dbReference type="InterPro" id="IPR022630">
    <property type="entry name" value="S-AdoMet_synt_C"/>
</dbReference>
<dbReference type="InterPro" id="IPR022629">
    <property type="entry name" value="S-AdoMet_synt_central"/>
</dbReference>
<dbReference type="InterPro" id="IPR022628">
    <property type="entry name" value="S-AdoMet_synt_N"/>
</dbReference>
<dbReference type="InterPro" id="IPR002133">
    <property type="entry name" value="S-AdoMet_synthetase"/>
</dbReference>
<dbReference type="InterPro" id="IPR022636">
    <property type="entry name" value="S-AdoMet_synthetase_sfam"/>
</dbReference>
<dbReference type="NCBIfam" id="TIGR01034">
    <property type="entry name" value="metK"/>
    <property type="match status" value="1"/>
</dbReference>
<dbReference type="PANTHER" id="PTHR11964">
    <property type="entry name" value="S-ADENOSYLMETHIONINE SYNTHETASE"/>
    <property type="match status" value="1"/>
</dbReference>
<dbReference type="Pfam" id="PF02773">
    <property type="entry name" value="S-AdoMet_synt_C"/>
    <property type="match status" value="1"/>
</dbReference>
<dbReference type="Pfam" id="PF02772">
    <property type="entry name" value="S-AdoMet_synt_M"/>
    <property type="match status" value="1"/>
</dbReference>
<dbReference type="Pfam" id="PF00438">
    <property type="entry name" value="S-AdoMet_synt_N"/>
    <property type="match status" value="1"/>
</dbReference>
<dbReference type="PIRSF" id="PIRSF000497">
    <property type="entry name" value="MAT"/>
    <property type="match status" value="1"/>
</dbReference>
<dbReference type="SUPFAM" id="SSF55973">
    <property type="entry name" value="S-adenosylmethionine synthetase"/>
    <property type="match status" value="3"/>
</dbReference>
<dbReference type="PROSITE" id="PS00376">
    <property type="entry name" value="ADOMET_SYNTHASE_1"/>
    <property type="match status" value="1"/>
</dbReference>
<dbReference type="PROSITE" id="PS00377">
    <property type="entry name" value="ADOMET_SYNTHASE_2"/>
    <property type="match status" value="1"/>
</dbReference>
<keyword id="KW-0067">ATP-binding</keyword>
<keyword id="KW-0963">Cytoplasm</keyword>
<keyword id="KW-0460">Magnesium</keyword>
<keyword id="KW-0479">Metal-binding</keyword>
<keyword id="KW-0547">Nucleotide-binding</keyword>
<keyword id="KW-0554">One-carbon metabolism</keyword>
<keyword id="KW-0630">Potassium</keyword>
<keyword id="KW-0808">Transferase</keyword>
<comment type="function">
    <text evidence="1">Catalyzes the formation of S-adenosylmethionine (AdoMet) from methionine and ATP. The overall synthetic reaction is composed of two sequential steps, AdoMet formation and the subsequent tripolyphosphate hydrolysis which occurs prior to release of AdoMet from the enzyme.</text>
</comment>
<comment type="catalytic activity">
    <reaction evidence="1">
        <text>L-methionine + ATP + H2O = S-adenosyl-L-methionine + phosphate + diphosphate</text>
        <dbReference type="Rhea" id="RHEA:21080"/>
        <dbReference type="ChEBI" id="CHEBI:15377"/>
        <dbReference type="ChEBI" id="CHEBI:30616"/>
        <dbReference type="ChEBI" id="CHEBI:33019"/>
        <dbReference type="ChEBI" id="CHEBI:43474"/>
        <dbReference type="ChEBI" id="CHEBI:57844"/>
        <dbReference type="ChEBI" id="CHEBI:59789"/>
        <dbReference type="EC" id="2.5.1.6"/>
    </reaction>
</comment>
<comment type="cofactor">
    <cofactor evidence="1">
        <name>Mg(2+)</name>
        <dbReference type="ChEBI" id="CHEBI:18420"/>
    </cofactor>
    <text evidence="1">Binds 2 divalent ions per subunit.</text>
</comment>
<comment type="cofactor">
    <cofactor evidence="1">
        <name>K(+)</name>
        <dbReference type="ChEBI" id="CHEBI:29103"/>
    </cofactor>
    <text evidence="1">Binds 1 potassium ion per subunit.</text>
</comment>
<comment type="pathway">
    <text evidence="1">Amino-acid biosynthesis; S-adenosyl-L-methionine biosynthesis; S-adenosyl-L-methionine from L-methionine: step 1/1.</text>
</comment>
<comment type="subunit">
    <text evidence="1">Homotetramer; dimer of dimers.</text>
</comment>
<comment type="subcellular location">
    <subcellularLocation>
        <location evidence="1">Cytoplasm</location>
    </subcellularLocation>
</comment>
<comment type="similarity">
    <text evidence="1">Belongs to the AdoMet synthase family.</text>
</comment>
<protein>
    <recommendedName>
        <fullName evidence="1">S-adenosylmethionine synthase</fullName>
        <shortName evidence="1">AdoMet synthase</shortName>
        <ecNumber evidence="1">2.5.1.6</ecNumber>
    </recommendedName>
    <alternativeName>
        <fullName evidence="1">MAT</fullName>
    </alternativeName>
    <alternativeName>
        <fullName evidence="1">Methionine adenosyltransferase</fullName>
    </alternativeName>
</protein>